<name>AROK_SALDC</name>
<sequence length="173" mass="19470">MAEKRNIFLVGPMGAGKSTIGRQLAQQLNMEFYDSDQEIEKRTGADVGWVFDVEGEDGFRNREEKVINELTEKQGIVLATGGGSVKSRETRNRLSARGVVVYLETTIEKQLARTQRDKKRPLLQVEAPPREVLEALANERNPLYEEIADVTIRTDDQSAKVVANQIIHMLESN</sequence>
<comment type="function">
    <text evidence="1">Catalyzes the specific phosphorylation of the 3-hydroxyl group of shikimic acid using ATP as a cosubstrate.</text>
</comment>
<comment type="catalytic activity">
    <reaction evidence="1">
        <text>shikimate + ATP = 3-phosphoshikimate + ADP + H(+)</text>
        <dbReference type="Rhea" id="RHEA:13121"/>
        <dbReference type="ChEBI" id="CHEBI:15378"/>
        <dbReference type="ChEBI" id="CHEBI:30616"/>
        <dbReference type="ChEBI" id="CHEBI:36208"/>
        <dbReference type="ChEBI" id="CHEBI:145989"/>
        <dbReference type="ChEBI" id="CHEBI:456216"/>
        <dbReference type="EC" id="2.7.1.71"/>
    </reaction>
</comment>
<comment type="cofactor">
    <cofactor evidence="1">
        <name>Mg(2+)</name>
        <dbReference type="ChEBI" id="CHEBI:18420"/>
    </cofactor>
    <text evidence="1">Binds 1 Mg(2+) ion per subunit.</text>
</comment>
<comment type="pathway">
    <text evidence="1">Metabolic intermediate biosynthesis; chorismate biosynthesis; chorismate from D-erythrose 4-phosphate and phosphoenolpyruvate: step 5/7.</text>
</comment>
<comment type="subunit">
    <text evidence="1">Monomer.</text>
</comment>
<comment type="subcellular location">
    <subcellularLocation>
        <location evidence="1">Cytoplasm</location>
    </subcellularLocation>
</comment>
<comment type="similarity">
    <text evidence="1">Belongs to the shikimate kinase family.</text>
</comment>
<accession>B5FJR0</accession>
<proteinExistence type="inferred from homology"/>
<protein>
    <recommendedName>
        <fullName evidence="1">Shikimate kinase 1</fullName>
        <shortName evidence="1">SK 1</shortName>
        <ecNumber evidence="1">2.7.1.71</ecNumber>
    </recommendedName>
</protein>
<gene>
    <name evidence="1" type="primary">aroK</name>
    <name type="ordered locus">SeD_A3855</name>
</gene>
<keyword id="KW-0028">Amino-acid biosynthesis</keyword>
<keyword id="KW-0057">Aromatic amino acid biosynthesis</keyword>
<keyword id="KW-0067">ATP-binding</keyword>
<keyword id="KW-0963">Cytoplasm</keyword>
<keyword id="KW-0418">Kinase</keyword>
<keyword id="KW-0460">Magnesium</keyword>
<keyword id="KW-0479">Metal-binding</keyword>
<keyword id="KW-0547">Nucleotide-binding</keyword>
<keyword id="KW-0808">Transferase</keyword>
<organism>
    <name type="scientific">Salmonella dublin (strain CT_02021853)</name>
    <dbReference type="NCBI Taxonomy" id="439851"/>
    <lineage>
        <taxon>Bacteria</taxon>
        <taxon>Pseudomonadati</taxon>
        <taxon>Pseudomonadota</taxon>
        <taxon>Gammaproteobacteria</taxon>
        <taxon>Enterobacterales</taxon>
        <taxon>Enterobacteriaceae</taxon>
        <taxon>Salmonella</taxon>
    </lineage>
</organism>
<evidence type="ECO:0000255" key="1">
    <source>
        <dbReference type="HAMAP-Rule" id="MF_00109"/>
    </source>
</evidence>
<dbReference type="EC" id="2.7.1.71" evidence="1"/>
<dbReference type="EMBL" id="CP001144">
    <property type="protein sequence ID" value="ACH77854.1"/>
    <property type="molecule type" value="Genomic_DNA"/>
</dbReference>
<dbReference type="RefSeq" id="WP_000818621.1">
    <property type="nucleotide sequence ID" value="NC_011205.1"/>
</dbReference>
<dbReference type="SMR" id="B5FJR0"/>
<dbReference type="GeneID" id="66757820"/>
<dbReference type="KEGG" id="sed:SeD_A3855"/>
<dbReference type="HOGENOM" id="CLU_057607_2_2_6"/>
<dbReference type="UniPathway" id="UPA00053">
    <property type="reaction ID" value="UER00088"/>
</dbReference>
<dbReference type="Proteomes" id="UP000008322">
    <property type="component" value="Chromosome"/>
</dbReference>
<dbReference type="GO" id="GO:0005829">
    <property type="term" value="C:cytosol"/>
    <property type="evidence" value="ECO:0007669"/>
    <property type="project" value="TreeGrafter"/>
</dbReference>
<dbReference type="GO" id="GO:0005524">
    <property type="term" value="F:ATP binding"/>
    <property type="evidence" value="ECO:0007669"/>
    <property type="project" value="UniProtKB-UniRule"/>
</dbReference>
<dbReference type="GO" id="GO:0000287">
    <property type="term" value="F:magnesium ion binding"/>
    <property type="evidence" value="ECO:0007669"/>
    <property type="project" value="UniProtKB-UniRule"/>
</dbReference>
<dbReference type="GO" id="GO:0004765">
    <property type="term" value="F:shikimate kinase activity"/>
    <property type="evidence" value="ECO:0007669"/>
    <property type="project" value="UniProtKB-UniRule"/>
</dbReference>
<dbReference type="GO" id="GO:0008652">
    <property type="term" value="P:amino acid biosynthetic process"/>
    <property type="evidence" value="ECO:0007669"/>
    <property type="project" value="UniProtKB-KW"/>
</dbReference>
<dbReference type="GO" id="GO:0009073">
    <property type="term" value="P:aromatic amino acid family biosynthetic process"/>
    <property type="evidence" value="ECO:0007669"/>
    <property type="project" value="UniProtKB-KW"/>
</dbReference>
<dbReference type="GO" id="GO:0009423">
    <property type="term" value="P:chorismate biosynthetic process"/>
    <property type="evidence" value="ECO:0007669"/>
    <property type="project" value="UniProtKB-UniRule"/>
</dbReference>
<dbReference type="CDD" id="cd00464">
    <property type="entry name" value="SK"/>
    <property type="match status" value="1"/>
</dbReference>
<dbReference type="FunFam" id="3.40.50.300:FF:000099">
    <property type="entry name" value="Shikimate kinase 1"/>
    <property type="match status" value="1"/>
</dbReference>
<dbReference type="Gene3D" id="3.40.50.300">
    <property type="entry name" value="P-loop containing nucleotide triphosphate hydrolases"/>
    <property type="match status" value="1"/>
</dbReference>
<dbReference type="HAMAP" id="MF_00109">
    <property type="entry name" value="Shikimate_kinase"/>
    <property type="match status" value="1"/>
</dbReference>
<dbReference type="InterPro" id="IPR027417">
    <property type="entry name" value="P-loop_NTPase"/>
</dbReference>
<dbReference type="InterPro" id="IPR031322">
    <property type="entry name" value="Shikimate/glucono_kinase"/>
</dbReference>
<dbReference type="InterPro" id="IPR000623">
    <property type="entry name" value="Shikimate_kinase/TSH1"/>
</dbReference>
<dbReference type="InterPro" id="IPR023000">
    <property type="entry name" value="Shikimate_kinase_CS"/>
</dbReference>
<dbReference type="NCBIfam" id="NF003456">
    <property type="entry name" value="PRK05057.1"/>
    <property type="match status" value="1"/>
</dbReference>
<dbReference type="PANTHER" id="PTHR21087">
    <property type="entry name" value="SHIKIMATE KINASE"/>
    <property type="match status" value="1"/>
</dbReference>
<dbReference type="PANTHER" id="PTHR21087:SF16">
    <property type="entry name" value="SHIKIMATE KINASE 1, CHLOROPLASTIC"/>
    <property type="match status" value="1"/>
</dbReference>
<dbReference type="Pfam" id="PF01202">
    <property type="entry name" value="SKI"/>
    <property type="match status" value="1"/>
</dbReference>
<dbReference type="PRINTS" id="PR01100">
    <property type="entry name" value="SHIKIMTKNASE"/>
</dbReference>
<dbReference type="SUPFAM" id="SSF52540">
    <property type="entry name" value="P-loop containing nucleoside triphosphate hydrolases"/>
    <property type="match status" value="1"/>
</dbReference>
<dbReference type="PROSITE" id="PS01128">
    <property type="entry name" value="SHIKIMATE_KINASE"/>
    <property type="match status" value="1"/>
</dbReference>
<reference key="1">
    <citation type="journal article" date="2011" name="J. Bacteriol.">
        <title>Comparative genomics of 28 Salmonella enterica isolates: evidence for CRISPR-mediated adaptive sublineage evolution.</title>
        <authorList>
            <person name="Fricke W.F."/>
            <person name="Mammel M.K."/>
            <person name="McDermott P.F."/>
            <person name="Tartera C."/>
            <person name="White D.G."/>
            <person name="Leclerc J.E."/>
            <person name="Ravel J."/>
            <person name="Cebula T.A."/>
        </authorList>
    </citation>
    <scope>NUCLEOTIDE SEQUENCE [LARGE SCALE GENOMIC DNA]</scope>
    <source>
        <strain>CT_02021853</strain>
    </source>
</reference>
<feature type="chain" id="PRO_1000094405" description="Shikimate kinase 1">
    <location>
        <begin position="1"/>
        <end position="173"/>
    </location>
</feature>
<feature type="binding site" evidence="1">
    <location>
        <begin position="14"/>
        <end position="19"/>
    </location>
    <ligand>
        <name>ATP</name>
        <dbReference type="ChEBI" id="CHEBI:30616"/>
    </ligand>
</feature>
<feature type="binding site" evidence="1">
    <location>
        <position position="18"/>
    </location>
    <ligand>
        <name>Mg(2+)</name>
        <dbReference type="ChEBI" id="CHEBI:18420"/>
    </ligand>
</feature>
<feature type="binding site" evidence="1">
    <location>
        <position position="36"/>
    </location>
    <ligand>
        <name>substrate</name>
    </ligand>
</feature>
<feature type="binding site" evidence="1">
    <location>
        <position position="60"/>
    </location>
    <ligand>
        <name>substrate</name>
    </ligand>
</feature>
<feature type="binding site" evidence="1">
    <location>
        <position position="82"/>
    </location>
    <ligand>
        <name>substrate</name>
    </ligand>
</feature>
<feature type="binding site" evidence="1">
    <location>
        <position position="120"/>
    </location>
    <ligand>
        <name>ATP</name>
        <dbReference type="ChEBI" id="CHEBI:30616"/>
    </ligand>
</feature>
<feature type="binding site" evidence="1">
    <location>
        <position position="140"/>
    </location>
    <ligand>
        <name>substrate</name>
    </ligand>
</feature>
<feature type="binding site" evidence="1">
    <location>
        <position position="157"/>
    </location>
    <ligand>
        <name>ATP</name>
        <dbReference type="ChEBI" id="CHEBI:30616"/>
    </ligand>
</feature>